<sequence>MKFLFDLFPVILFFVAFKLFGIYPATAVAIGATVVQIAWVHFRHGKAEPMQWVSLAIIAVFGGATILLHNETFIKWKPTVLYWLFAVTLIGSVIGWRKNLIRAMMEKQVTLPEPMWGRLNVAWAGFFAVMGVLNLYVAYQFSTDTWVNFKLFGSMGLMLVFIVAQSIWLSRHIQETPSE</sequence>
<evidence type="ECO:0000255" key="1">
    <source>
        <dbReference type="HAMAP-Rule" id="MF_00189"/>
    </source>
</evidence>
<accession>Q1LM81</accession>
<proteinExistence type="inferred from homology"/>
<organism>
    <name type="scientific">Cupriavidus metallidurans (strain ATCC 43123 / DSM 2839 / NBRC 102507 / CH34)</name>
    <name type="common">Ralstonia metallidurans</name>
    <dbReference type="NCBI Taxonomy" id="266264"/>
    <lineage>
        <taxon>Bacteria</taxon>
        <taxon>Pseudomonadati</taxon>
        <taxon>Pseudomonadota</taxon>
        <taxon>Betaproteobacteria</taxon>
        <taxon>Burkholderiales</taxon>
        <taxon>Burkholderiaceae</taxon>
        <taxon>Cupriavidus</taxon>
    </lineage>
</organism>
<gene>
    <name evidence="1" type="primary">yciB</name>
    <name type="ordered locus">Rmet_1866</name>
</gene>
<keyword id="KW-0997">Cell inner membrane</keyword>
<keyword id="KW-1003">Cell membrane</keyword>
<keyword id="KW-0472">Membrane</keyword>
<keyword id="KW-1185">Reference proteome</keyword>
<keyword id="KW-0812">Transmembrane</keyword>
<keyword id="KW-1133">Transmembrane helix</keyword>
<comment type="function">
    <text evidence="1">Plays a role in cell envelope biogenesis, maintenance of cell envelope integrity and membrane homeostasis.</text>
</comment>
<comment type="subcellular location">
    <subcellularLocation>
        <location evidence="1">Cell inner membrane</location>
        <topology evidence="1">Multi-pass membrane protein</topology>
    </subcellularLocation>
</comment>
<comment type="similarity">
    <text evidence="1">Belongs to the YciB family.</text>
</comment>
<feature type="chain" id="PRO_1000021048" description="Inner membrane-spanning protein YciB">
    <location>
        <begin position="1"/>
        <end position="179"/>
    </location>
</feature>
<feature type="transmembrane region" description="Helical" evidence="1">
    <location>
        <begin position="3"/>
        <end position="23"/>
    </location>
</feature>
<feature type="transmembrane region" description="Helical" evidence="1">
    <location>
        <begin position="49"/>
        <end position="69"/>
    </location>
</feature>
<feature type="transmembrane region" description="Helical" evidence="1">
    <location>
        <begin position="76"/>
        <end position="96"/>
    </location>
</feature>
<feature type="transmembrane region" description="Helical" evidence="1">
    <location>
        <begin position="121"/>
        <end position="141"/>
    </location>
</feature>
<feature type="transmembrane region" description="Helical" evidence="1">
    <location>
        <begin position="149"/>
        <end position="169"/>
    </location>
</feature>
<name>YCIB_CUPMC</name>
<dbReference type="EMBL" id="CP000352">
    <property type="protein sequence ID" value="ABF08745.1"/>
    <property type="molecule type" value="Genomic_DNA"/>
</dbReference>
<dbReference type="RefSeq" id="WP_008650249.1">
    <property type="nucleotide sequence ID" value="NC_007973.1"/>
</dbReference>
<dbReference type="STRING" id="266264.Rmet_1866"/>
<dbReference type="KEGG" id="rme:Rmet_1866"/>
<dbReference type="eggNOG" id="COG2917">
    <property type="taxonomic scope" value="Bacteria"/>
</dbReference>
<dbReference type="HOGENOM" id="CLU_089554_2_0_4"/>
<dbReference type="Proteomes" id="UP000002429">
    <property type="component" value="Chromosome"/>
</dbReference>
<dbReference type="GO" id="GO:0005886">
    <property type="term" value="C:plasma membrane"/>
    <property type="evidence" value="ECO:0007669"/>
    <property type="project" value="UniProtKB-SubCell"/>
</dbReference>
<dbReference type="HAMAP" id="MF_00189">
    <property type="entry name" value="YciB"/>
    <property type="match status" value="1"/>
</dbReference>
<dbReference type="InterPro" id="IPR006008">
    <property type="entry name" value="YciB"/>
</dbReference>
<dbReference type="NCBIfam" id="TIGR00997">
    <property type="entry name" value="ispZ"/>
    <property type="match status" value="1"/>
</dbReference>
<dbReference type="NCBIfam" id="NF001325">
    <property type="entry name" value="PRK00259.1-3"/>
    <property type="match status" value="1"/>
</dbReference>
<dbReference type="PANTHER" id="PTHR36917:SF1">
    <property type="entry name" value="INNER MEMBRANE-SPANNING PROTEIN YCIB"/>
    <property type="match status" value="1"/>
</dbReference>
<dbReference type="PANTHER" id="PTHR36917">
    <property type="entry name" value="INTRACELLULAR SEPTATION PROTEIN A-RELATED"/>
    <property type="match status" value="1"/>
</dbReference>
<dbReference type="Pfam" id="PF04279">
    <property type="entry name" value="IspA"/>
    <property type="match status" value="1"/>
</dbReference>
<reference key="1">
    <citation type="journal article" date="2010" name="PLoS ONE">
        <title>The complete genome sequence of Cupriavidus metallidurans strain CH34, a master survivalist in harsh and anthropogenic environments.</title>
        <authorList>
            <person name="Janssen P.J."/>
            <person name="Van Houdt R."/>
            <person name="Moors H."/>
            <person name="Monsieurs P."/>
            <person name="Morin N."/>
            <person name="Michaux A."/>
            <person name="Benotmane M.A."/>
            <person name="Leys N."/>
            <person name="Vallaeys T."/>
            <person name="Lapidus A."/>
            <person name="Monchy S."/>
            <person name="Medigue C."/>
            <person name="Taghavi S."/>
            <person name="McCorkle S."/>
            <person name="Dunn J."/>
            <person name="van der Lelie D."/>
            <person name="Mergeay M."/>
        </authorList>
    </citation>
    <scope>NUCLEOTIDE SEQUENCE [LARGE SCALE GENOMIC DNA]</scope>
    <source>
        <strain>ATCC 43123 / DSM 2839 / NBRC 102507 / CH34</strain>
    </source>
</reference>
<protein>
    <recommendedName>
        <fullName evidence="1">Inner membrane-spanning protein YciB</fullName>
    </recommendedName>
</protein>